<comment type="function">
    <text evidence="1">Endonuclease IV plays a role in DNA repair. It cleaves phosphodiester bonds at apurinic or apyrimidinic (AP) sites, generating a 3'-hydroxyl group and a 5'-terminal sugar phosphate.</text>
</comment>
<comment type="catalytic activity">
    <reaction evidence="1">
        <text>Endonucleolytic cleavage to 5'-phosphooligonucleotide end-products.</text>
        <dbReference type="EC" id="3.1.21.2"/>
    </reaction>
</comment>
<comment type="cofactor">
    <cofactor evidence="1">
        <name>Zn(2+)</name>
        <dbReference type="ChEBI" id="CHEBI:29105"/>
    </cofactor>
    <text evidence="1">Binds 3 Zn(2+) ions.</text>
</comment>
<comment type="similarity">
    <text evidence="1">Belongs to the AP endonuclease 2 family.</text>
</comment>
<dbReference type="EC" id="3.1.21.2" evidence="1"/>
<dbReference type="EMBL" id="CP000716">
    <property type="protein sequence ID" value="ABR31249.1"/>
    <property type="molecule type" value="Genomic_DNA"/>
</dbReference>
<dbReference type="RefSeq" id="WP_012057608.1">
    <property type="nucleotide sequence ID" value="NC_009616.1"/>
</dbReference>
<dbReference type="SMR" id="A6LMU8"/>
<dbReference type="STRING" id="391009.Tmel_1402"/>
<dbReference type="KEGG" id="tme:Tmel_1402"/>
<dbReference type="eggNOG" id="COG0648">
    <property type="taxonomic scope" value="Bacteria"/>
</dbReference>
<dbReference type="HOGENOM" id="CLU_025885_0_1_0"/>
<dbReference type="OrthoDB" id="9805666at2"/>
<dbReference type="Proteomes" id="UP000001110">
    <property type="component" value="Chromosome"/>
</dbReference>
<dbReference type="GO" id="GO:0008833">
    <property type="term" value="F:deoxyribonuclease IV (phage-T4-induced) activity"/>
    <property type="evidence" value="ECO:0007669"/>
    <property type="project" value="UniProtKB-UniRule"/>
</dbReference>
<dbReference type="GO" id="GO:0003677">
    <property type="term" value="F:DNA binding"/>
    <property type="evidence" value="ECO:0007669"/>
    <property type="project" value="InterPro"/>
</dbReference>
<dbReference type="GO" id="GO:0003906">
    <property type="term" value="F:DNA-(apurinic or apyrimidinic site) endonuclease activity"/>
    <property type="evidence" value="ECO:0007669"/>
    <property type="project" value="TreeGrafter"/>
</dbReference>
<dbReference type="GO" id="GO:0008081">
    <property type="term" value="F:phosphoric diester hydrolase activity"/>
    <property type="evidence" value="ECO:0007669"/>
    <property type="project" value="TreeGrafter"/>
</dbReference>
<dbReference type="GO" id="GO:0008270">
    <property type="term" value="F:zinc ion binding"/>
    <property type="evidence" value="ECO:0007669"/>
    <property type="project" value="UniProtKB-UniRule"/>
</dbReference>
<dbReference type="GO" id="GO:0006284">
    <property type="term" value="P:base-excision repair"/>
    <property type="evidence" value="ECO:0007669"/>
    <property type="project" value="TreeGrafter"/>
</dbReference>
<dbReference type="CDD" id="cd00019">
    <property type="entry name" value="AP2Ec"/>
    <property type="match status" value="1"/>
</dbReference>
<dbReference type="FunFam" id="3.20.20.150:FF:000001">
    <property type="entry name" value="Probable endonuclease 4"/>
    <property type="match status" value="1"/>
</dbReference>
<dbReference type="Gene3D" id="3.20.20.150">
    <property type="entry name" value="Divalent-metal-dependent TIM barrel enzymes"/>
    <property type="match status" value="1"/>
</dbReference>
<dbReference type="HAMAP" id="MF_00152">
    <property type="entry name" value="Nfo"/>
    <property type="match status" value="1"/>
</dbReference>
<dbReference type="InterPro" id="IPR001719">
    <property type="entry name" value="AP_endonuc_2"/>
</dbReference>
<dbReference type="InterPro" id="IPR018246">
    <property type="entry name" value="AP_endonuc_F2_Zn_BS"/>
</dbReference>
<dbReference type="InterPro" id="IPR036237">
    <property type="entry name" value="Xyl_isomerase-like_sf"/>
</dbReference>
<dbReference type="InterPro" id="IPR013022">
    <property type="entry name" value="Xyl_isomerase-like_TIM-brl"/>
</dbReference>
<dbReference type="NCBIfam" id="TIGR00587">
    <property type="entry name" value="nfo"/>
    <property type="match status" value="1"/>
</dbReference>
<dbReference type="PANTHER" id="PTHR21445:SF0">
    <property type="entry name" value="APURINIC-APYRIMIDINIC ENDONUCLEASE"/>
    <property type="match status" value="1"/>
</dbReference>
<dbReference type="PANTHER" id="PTHR21445">
    <property type="entry name" value="ENDONUCLEASE IV ENDODEOXYRIBONUCLEASE IV"/>
    <property type="match status" value="1"/>
</dbReference>
<dbReference type="Pfam" id="PF01261">
    <property type="entry name" value="AP_endonuc_2"/>
    <property type="match status" value="1"/>
</dbReference>
<dbReference type="SMART" id="SM00518">
    <property type="entry name" value="AP2Ec"/>
    <property type="match status" value="1"/>
</dbReference>
<dbReference type="SUPFAM" id="SSF51658">
    <property type="entry name" value="Xylose isomerase-like"/>
    <property type="match status" value="1"/>
</dbReference>
<dbReference type="PROSITE" id="PS00729">
    <property type="entry name" value="AP_NUCLEASE_F2_1"/>
    <property type="match status" value="1"/>
</dbReference>
<dbReference type="PROSITE" id="PS00730">
    <property type="entry name" value="AP_NUCLEASE_F2_2"/>
    <property type="match status" value="1"/>
</dbReference>
<dbReference type="PROSITE" id="PS00731">
    <property type="entry name" value="AP_NUCLEASE_F2_3"/>
    <property type="match status" value="1"/>
</dbReference>
<dbReference type="PROSITE" id="PS51432">
    <property type="entry name" value="AP_NUCLEASE_F2_4"/>
    <property type="match status" value="1"/>
</dbReference>
<keyword id="KW-0227">DNA damage</keyword>
<keyword id="KW-0234">DNA repair</keyword>
<keyword id="KW-0255">Endonuclease</keyword>
<keyword id="KW-0378">Hydrolase</keyword>
<keyword id="KW-0479">Metal-binding</keyword>
<keyword id="KW-0540">Nuclease</keyword>
<keyword id="KW-0862">Zinc</keyword>
<evidence type="ECO:0000255" key="1">
    <source>
        <dbReference type="HAMAP-Rule" id="MF_00152"/>
    </source>
</evidence>
<gene>
    <name evidence="1" type="primary">nfo</name>
    <name type="ordered locus">Tmel_1402</name>
</gene>
<accession>A6LMU8</accession>
<feature type="chain" id="PRO_1000011343" description="Probable endonuclease 4">
    <location>
        <begin position="1"/>
        <end position="283"/>
    </location>
</feature>
<feature type="binding site" evidence="1">
    <location>
        <position position="69"/>
    </location>
    <ligand>
        <name>Zn(2+)</name>
        <dbReference type="ChEBI" id="CHEBI:29105"/>
        <label>1</label>
    </ligand>
</feature>
<feature type="binding site" evidence="1">
    <location>
        <position position="109"/>
    </location>
    <ligand>
        <name>Zn(2+)</name>
        <dbReference type="ChEBI" id="CHEBI:29105"/>
        <label>1</label>
    </ligand>
</feature>
<feature type="binding site" evidence="1">
    <location>
        <position position="144"/>
    </location>
    <ligand>
        <name>Zn(2+)</name>
        <dbReference type="ChEBI" id="CHEBI:29105"/>
        <label>1</label>
    </ligand>
</feature>
<feature type="binding site" evidence="1">
    <location>
        <position position="144"/>
    </location>
    <ligand>
        <name>Zn(2+)</name>
        <dbReference type="ChEBI" id="CHEBI:29105"/>
        <label>2</label>
    </ligand>
</feature>
<feature type="binding site" evidence="1">
    <location>
        <position position="178"/>
    </location>
    <ligand>
        <name>Zn(2+)</name>
        <dbReference type="ChEBI" id="CHEBI:29105"/>
        <label>2</label>
    </ligand>
</feature>
<feature type="binding site" evidence="1">
    <location>
        <position position="181"/>
    </location>
    <ligand>
        <name>Zn(2+)</name>
        <dbReference type="ChEBI" id="CHEBI:29105"/>
        <label>3</label>
    </ligand>
</feature>
<feature type="binding site" evidence="1">
    <location>
        <position position="215"/>
    </location>
    <ligand>
        <name>Zn(2+)</name>
        <dbReference type="ChEBI" id="CHEBI:29105"/>
        <label>2</label>
    </ligand>
</feature>
<feature type="binding site" evidence="1">
    <location>
        <position position="228"/>
    </location>
    <ligand>
        <name>Zn(2+)</name>
        <dbReference type="ChEBI" id="CHEBI:29105"/>
        <label>3</label>
    </ligand>
</feature>
<feature type="binding site" evidence="1">
    <location>
        <position position="230"/>
    </location>
    <ligand>
        <name>Zn(2+)</name>
        <dbReference type="ChEBI" id="CHEBI:29105"/>
        <label>3</label>
    </ligand>
</feature>
<feature type="binding site" evidence="1">
    <location>
        <position position="260"/>
    </location>
    <ligand>
        <name>Zn(2+)</name>
        <dbReference type="ChEBI" id="CHEBI:29105"/>
        <label>2</label>
    </ligand>
</feature>
<organism>
    <name type="scientific">Thermosipho melanesiensis (strain DSM 12029 / CIP 104789 / BI429)</name>
    <dbReference type="NCBI Taxonomy" id="391009"/>
    <lineage>
        <taxon>Bacteria</taxon>
        <taxon>Thermotogati</taxon>
        <taxon>Thermotogota</taxon>
        <taxon>Thermotogae</taxon>
        <taxon>Thermotogales</taxon>
        <taxon>Fervidobacteriaceae</taxon>
        <taxon>Thermosipho</taxon>
    </lineage>
</organism>
<sequence length="283" mass="32273">MIKIGAHMPISGGFKRVPKETHEIGGNAFQIFPHNPRQWKAKLPKDDDVEIFKKRVKEYNLTEDSMLCHSGYLINIASPKEEIWQKSLELLILEMNICKTLGIRYLNIHPGSHLNSGVEKGINQIVKALNIAMEKEKETFILLENVTKKGGNIGSTLEELKMIIEMVKYPERIGITIDTCHAFDAGYDITNKEKLDKFLKMIDKLFSLEKLKFIHLNDSKNELGSNKDRHENIGKGKIGVKGLKTFLTNETIQKIPWILETPGDNEVHKNDIKEVFNILGVKQ</sequence>
<protein>
    <recommendedName>
        <fullName evidence="1">Probable endonuclease 4</fullName>
        <ecNumber evidence="1">3.1.21.2</ecNumber>
    </recommendedName>
    <alternativeName>
        <fullName evidence="1">Endodeoxyribonuclease IV</fullName>
    </alternativeName>
    <alternativeName>
        <fullName evidence="1">Endonuclease IV</fullName>
    </alternativeName>
</protein>
<name>END4_THEM4</name>
<reference key="1">
    <citation type="submission" date="2007-05" db="EMBL/GenBank/DDBJ databases">
        <title>Complete sequence of Thermosipho melanesiensis BI429.</title>
        <authorList>
            <consortium name="US DOE Joint Genome Institute"/>
            <person name="Copeland A."/>
            <person name="Lucas S."/>
            <person name="Lapidus A."/>
            <person name="Barry K."/>
            <person name="Glavina del Rio T."/>
            <person name="Dalin E."/>
            <person name="Tice H."/>
            <person name="Pitluck S."/>
            <person name="Chertkov O."/>
            <person name="Brettin T."/>
            <person name="Bruce D."/>
            <person name="Detter J.C."/>
            <person name="Han C."/>
            <person name="Schmutz J."/>
            <person name="Larimer F."/>
            <person name="Land M."/>
            <person name="Hauser L."/>
            <person name="Kyrpides N."/>
            <person name="Mikhailova N."/>
            <person name="Nelson K."/>
            <person name="Gogarten J.P."/>
            <person name="Noll K."/>
            <person name="Richardson P."/>
        </authorList>
    </citation>
    <scope>NUCLEOTIDE SEQUENCE [LARGE SCALE GENOMIC DNA]</scope>
    <source>
        <strain>DSM 12029 / CIP 104789 / BI429</strain>
    </source>
</reference>
<proteinExistence type="inferred from homology"/>